<name>TTCA_BORPA</name>
<gene>
    <name evidence="1" type="primary">ttcA</name>
    <name type="ordered locus">BPP4148</name>
</gene>
<accession>Q7W398</accession>
<feature type="chain" id="PRO_0000348669" description="tRNA-cytidine(32) 2-sulfurtransferase">
    <location>
        <begin position="1"/>
        <end position="320"/>
    </location>
</feature>
<feature type="short sequence motif" description="PP-loop motif" evidence="1">
    <location>
        <begin position="54"/>
        <end position="59"/>
    </location>
</feature>
<feature type="binding site" evidence="1">
    <location>
        <position position="129"/>
    </location>
    <ligand>
        <name>[4Fe-4S] cluster</name>
        <dbReference type="ChEBI" id="CHEBI:49883"/>
    </ligand>
</feature>
<feature type="binding site" evidence="1">
    <location>
        <position position="132"/>
    </location>
    <ligand>
        <name>[4Fe-4S] cluster</name>
        <dbReference type="ChEBI" id="CHEBI:49883"/>
    </ligand>
</feature>
<feature type="binding site" evidence="1">
    <location>
        <position position="220"/>
    </location>
    <ligand>
        <name>[4Fe-4S] cluster</name>
        <dbReference type="ChEBI" id="CHEBI:49883"/>
    </ligand>
</feature>
<organism>
    <name type="scientific">Bordetella parapertussis (strain 12822 / ATCC BAA-587 / NCTC 13253)</name>
    <dbReference type="NCBI Taxonomy" id="257311"/>
    <lineage>
        <taxon>Bacteria</taxon>
        <taxon>Pseudomonadati</taxon>
        <taxon>Pseudomonadota</taxon>
        <taxon>Betaproteobacteria</taxon>
        <taxon>Burkholderiales</taxon>
        <taxon>Alcaligenaceae</taxon>
        <taxon>Bordetella</taxon>
    </lineage>
</organism>
<comment type="function">
    <text evidence="1">Catalyzes the ATP-dependent 2-thiolation of cytidine in position 32 of tRNA, to form 2-thiocytidine (s(2)C32). The sulfur atoms are provided by the cysteine/cysteine desulfurase (IscS) system.</text>
</comment>
<comment type="catalytic activity">
    <reaction evidence="1">
        <text>cytidine(32) in tRNA + S-sulfanyl-L-cysteinyl-[cysteine desulfurase] + AH2 + ATP = 2-thiocytidine(32) in tRNA + L-cysteinyl-[cysteine desulfurase] + A + AMP + diphosphate + H(+)</text>
        <dbReference type="Rhea" id="RHEA:57048"/>
        <dbReference type="Rhea" id="RHEA-COMP:10288"/>
        <dbReference type="Rhea" id="RHEA-COMP:12157"/>
        <dbReference type="Rhea" id="RHEA-COMP:12158"/>
        <dbReference type="Rhea" id="RHEA-COMP:14821"/>
        <dbReference type="ChEBI" id="CHEBI:13193"/>
        <dbReference type="ChEBI" id="CHEBI:15378"/>
        <dbReference type="ChEBI" id="CHEBI:17499"/>
        <dbReference type="ChEBI" id="CHEBI:29950"/>
        <dbReference type="ChEBI" id="CHEBI:30616"/>
        <dbReference type="ChEBI" id="CHEBI:33019"/>
        <dbReference type="ChEBI" id="CHEBI:61963"/>
        <dbReference type="ChEBI" id="CHEBI:82748"/>
        <dbReference type="ChEBI" id="CHEBI:141453"/>
        <dbReference type="ChEBI" id="CHEBI:456215"/>
    </reaction>
    <physiologicalReaction direction="left-to-right" evidence="1">
        <dbReference type="Rhea" id="RHEA:57049"/>
    </physiologicalReaction>
</comment>
<comment type="cofactor">
    <cofactor evidence="1">
        <name>Mg(2+)</name>
        <dbReference type="ChEBI" id="CHEBI:18420"/>
    </cofactor>
</comment>
<comment type="cofactor">
    <cofactor evidence="1">
        <name>[4Fe-4S] cluster</name>
        <dbReference type="ChEBI" id="CHEBI:49883"/>
    </cofactor>
    <text evidence="1">Binds 1 [4Fe-4S] cluster per subunit. The cluster is chelated by three Cys residues, the fourth Fe has a free coordination site that may bind a sulfur atom transferred from the persulfide of IscS.</text>
</comment>
<comment type="pathway">
    <text evidence="1">tRNA modification.</text>
</comment>
<comment type="subunit">
    <text evidence="1">Homodimer.</text>
</comment>
<comment type="subcellular location">
    <subcellularLocation>
        <location evidence="1">Cytoplasm</location>
    </subcellularLocation>
</comment>
<comment type="miscellaneous">
    <text evidence="1">The thiolation reaction likely consists of two steps: a first activation step by ATP to form an adenylated intermediate of the target base of tRNA, and a second nucleophilic substitution step of the sulfur (S) atom supplied by the hydrosulfide attached to the Fe-S cluster.</text>
</comment>
<comment type="similarity">
    <text evidence="1">Belongs to the TtcA family.</text>
</comment>
<dbReference type="EC" id="2.8.1.-" evidence="1"/>
<dbReference type="EMBL" id="BX640435">
    <property type="protein sequence ID" value="CAE39427.1"/>
    <property type="molecule type" value="Genomic_DNA"/>
</dbReference>
<dbReference type="RefSeq" id="WP_010929410.1">
    <property type="nucleotide sequence ID" value="NC_002928.3"/>
</dbReference>
<dbReference type="SMR" id="Q7W398"/>
<dbReference type="GeneID" id="93205944"/>
<dbReference type="KEGG" id="bpa:BPP4148"/>
<dbReference type="HOGENOM" id="CLU_026481_0_0_4"/>
<dbReference type="Proteomes" id="UP000001421">
    <property type="component" value="Chromosome"/>
</dbReference>
<dbReference type="GO" id="GO:0005737">
    <property type="term" value="C:cytoplasm"/>
    <property type="evidence" value="ECO:0007669"/>
    <property type="project" value="UniProtKB-SubCell"/>
</dbReference>
<dbReference type="GO" id="GO:0051539">
    <property type="term" value="F:4 iron, 4 sulfur cluster binding"/>
    <property type="evidence" value="ECO:0007669"/>
    <property type="project" value="UniProtKB-UniRule"/>
</dbReference>
<dbReference type="GO" id="GO:0005524">
    <property type="term" value="F:ATP binding"/>
    <property type="evidence" value="ECO:0007669"/>
    <property type="project" value="UniProtKB-UniRule"/>
</dbReference>
<dbReference type="GO" id="GO:0000287">
    <property type="term" value="F:magnesium ion binding"/>
    <property type="evidence" value="ECO:0007669"/>
    <property type="project" value="UniProtKB-UniRule"/>
</dbReference>
<dbReference type="GO" id="GO:0016783">
    <property type="term" value="F:sulfurtransferase activity"/>
    <property type="evidence" value="ECO:0007669"/>
    <property type="project" value="UniProtKB-UniRule"/>
</dbReference>
<dbReference type="GO" id="GO:0000049">
    <property type="term" value="F:tRNA binding"/>
    <property type="evidence" value="ECO:0007669"/>
    <property type="project" value="UniProtKB-KW"/>
</dbReference>
<dbReference type="GO" id="GO:0034227">
    <property type="term" value="P:tRNA thio-modification"/>
    <property type="evidence" value="ECO:0007669"/>
    <property type="project" value="UniProtKB-UniRule"/>
</dbReference>
<dbReference type="CDD" id="cd24138">
    <property type="entry name" value="TtcA-like"/>
    <property type="match status" value="1"/>
</dbReference>
<dbReference type="Gene3D" id="3.40.50.620">
    <property type="entry name" value="HUPs"/>
    <property type="match status" value="1"/>
</dbReference>
<dbReference type="HAMAP" id="MF_01850">
    <property type="entry name" value="TtcA"/>
    <property type="match status" value="1"/>
</dbReference>
<dbReference type="InterPro" id="IPR014729">
    <property type="entry name" value="Rossmann-like_a/b/a_fold"/>
</dbReference>
<dbReference type="InterPro" id="IPR011063">
    <property type="entry name" value="TilS/TtcA_N"/>
</dbReference>
<dbReference type="InterPro" id="IPR012089">
    <property type="entry name" value="tRNA_Cyd_32_2_STrfase"/>
</dbReference>
<dbReference type="NCBIfam" id="NF007972">
    <property type="entry name" value="PRK10696.1"/>
    <property type="match status" value="1"/>
</dbReference>
<dbReference type="PANTHER" id="PTHR43686:SF1">
    <property type="entry name" value="AMINOTRAN_5 DOMAIN-CONTAINING PROTEIN"/>
    <property type="match status" value="1"/>
</dbReference>
<dbReference type="PANTHER" id="PTHR43686">
    <property type="entry name" value="SULFURTRANSFERASE-RELATED"/>
    <property type="match status" value="1"/>
</dbReference>
<dbReference type="Pfam" id="PF01171">
    <property type="entry name" value="ATP_bind_3"/>
    <property type="match status" value="1"/>
</dbReference>
<dbReference type="SUPFAM" id="SSF52402">
    <property type="entry name" value="Adenine nucleotide alpha hydrolases-like"/>
    <property type="match status" value="1"/>
</dbReference>
<reference key="1">
    <citation type="journal article" date="2003" name="Nat. Genet.">
        <title>Comparative analysis of the genome sequences of Bordetella pertussis, Bordetella parapertussis and Bordetella bronchiseptica.</title>
        <authorList>
            <person name="Parkhill J."/>
            <person name="Sebaihia M."/>
            <person name="Preston A."/>
            <person name="Murphy L.D."/>
            <person name="Thomson N.R."/>
            <person name="Harris D.E."/>
            <person name="Holden M.T.G."/>
            <person name="Churcher C.M."/>
            <person name="Bentley S.D."/>
            <person name="Mungall K.L."/>
            <person name="Cerdeno-Tarraga A.-M."/>
            <person name="Temple L."/>
            <person name="James K.D."/>
            <person name="Harris B."/>
            <person name="Quail M.A."/>
            <person name="Achtman M."/>
            <person name="Atkin R."/>
            <person name="Baker S."/>
            <person name="Basham D."/>
            <person name="Bason N."/>
            <person name="Cherevach I."/>
            <person name="Chillingworth T."/>
            <person name="Collins M."/>
            <person name="Cronin A."/>
            <person name="Davis P."/>
            <person name="Doggett J."/>
            <person name="Feltwell T."/>
            <person name="Goble A."/>
            <person name="Hamlin N."/>
            <person name="Hauser H."/>
            <person name="Holroyd S."/>
            <person name="Jagels K."/>
            <person name="Leather S."/>
            <person name="Moule S."/>
            <person name="Norberczak H."/>
            <person name="O'Neil S."/>
            <person name="Ormond D."/>
            <person name="Price C."/>
            <person name="Rabbinowitsch E."/>
            <person name="Rutter S."/>
            <person name="Sanders M."/>
            <person name="Saunders D."/>
            <person name="Seeger K."/>
            <person name="Sharp S."/>
            <person name="Simmonds M."/>
            <person name="Skelton J."/>
            <person name="Squares R."/>
            <person name="Squares S."/>
            <person name="Stevens K."/>
            <person name="Unwin L."/>
            <person name="Whitehead S."/>
            <person name="Barrell B.G."/>
            <person name="Maskell D.J."/>
        </authorList>
    </citation>
    <scope>NUCLEOTIDE SEQUENCE [LARGE SCALE GENOMIC DNA]</scope>
    <source>
        <strain>12822 / ATCC BAA-587 / NCTC 13253</strain>
    </source>
</reference>
<proteinExistence type="inferred from homology"/>
<keyword id="KW-0004">4Fe-4S</keyword>
<keyword id="KW-0067">ATP-binding</keyword>
<keyword id="KW-0963">Cytoplasm</keyword>
<keyword id="KW-0408">Iron</keyword>
<keyword id="KW-0411">Iron-sulfur</keyword>
<keyword id="KW-0460">Magnesium</keyword>
<keyword id="KW-0479">Metal-binding</keyword>
<keyword id="KW-0547">Nucleotide-binding</keyword>
<keyword id="KW-0694">RNA-binding</keyword>
<keyword id="KW-0808">Transferase</keyword>
<keyword id="KW-0819">tRNA processing</keyword>
<keyword id="KW-0820">tRNA-binding</keyword>
<protein>
    <recommendedName>
        <fullName evidence="1">tRNA-cytidine(32) 2-sulfurtransferase</fullName>
        <ecNumber evidence="1">2.8.1.-</ecNumber>
    </recommendedName>
    <alternativeName>
        <fullName evidence="1">Two-thiocytidine biosynthesis protein A</fullName>
    </alternativeName>
    <alternativeName>
        <fullName evidence="1">tRNA 2-thiocytidine biosynthesis protein TtcA</fullName>
    </alternativeName>
</protein>
<sequence length="320" mass="35205">MTLTVSPTAARTPAEEKARFEGNKLAKRLARETTRAIADYNMIEAGDKVMVCLSGGKDSYALLDILLSLQKRAPFAFEIIAVNLDQKQPGFPPEILPGYLRALGVPFHIETQDTYSIVTRVIPEGKTMCSLCSRLRRGILYRVASELGATKIALGHHRDDILGTFFLNLFYGGKAKGMPPKLVSDDGRHTVIRPLAYVPESDLIAYAQFKQFPIIPCNLCGSQENLKRKEVGRMIQEWDRKHPGRSWNVFNALSRVVPSHLMDRDLFDFVGLKPTGVADAGGDTAFDQIDPEPDTAGPGCASDAPAGQADGMAEQRVVFR</sequence>
<evidence type="ECO:0000255" key="1">
    <source>
        <dbReference type="HAMAP-Rule" id="MF_01850"/>
    </source>
</evidence>